<sequence>MKKISRKEYVSMYGPTTGDKVRLGDTDLIAEVEHDYTIYGEELKFGGGKTLREGMSQSNNPSKEELDLIITNALIVDYTGIYKADIGIKDGKIAGIGKGGNKDMQDGVKNNLSVGPATEALAGEGLIVTAGGIDTHIHFISPQQIPTAFASGVTTMIGGGTGPADGTNATTITPGRRNLKWMLRAAEEYSMNLGFLAKGNTSNDASLADQIEAGAIGFKIHEDWGTTPSAINHALDVADKYDVQVAIHTDTLNEAGCVEDTMAAIAGRTMHTFHTEGAGGGHAPDIIKVAGEHNILPASTNPTIPFTVNTEAEHMDMLMVCHHLDKSIKEDVQFADSRIRPQTIAAEDTLHDMGIFSITSSDSQAMGRVGEVITRTWQTADKNKKEFGRLKEEKGDNDNFRIKRYLSKYTINPAIAHGISEYVGSVEVGKVADLVLWSPAFFGVKPNMIIKGGFIALSQMGDANASIPTPQPVYYREMFAHHGKAKYDANITFVSQAAYDKGIKEELGLERQVLPVKNCRNITKKDMQFNDTTAHIEVNPETYHVFVDGKEVTSKPANKVSLAQLFSIF</sequence>
<evidence type="ECO:0000255" key="1">
    <source>
        <dbReference type="HAMAP-Rule" id="MF_01953"/>
    </source>
</evidence>
<evidence type="ECO:0000305" key="2"/>
<feature type="chain" id="PRO_1000188875" description="Urease subunit beta">
    <location>
        <begin position="1"/>
        <end position="569"/>
    </location>
</feature>
<feature type="domain" description="Urease" evidence="1">
    <location>
        <begin position="131"/>
        <end position="569"/>
    </location>
</feature>
<feature type="active site" description="Proton donor" evidence="1">
    <location>
        <position position="322"/>
    </location>
</feature>
<feature type="binding site" evidence="1">
    <location>
        <position position="136"/>
    </location>
    <ligand>
        <name>Ni(2+)</name>
        <dbReference type="ChEBI" id="CHEBI:49786"/>
        <label>1</label>
    </ligand>
</feature>
<feature type="binding site" evidence="1">
    <location>
        <position position="138"/>
    </location>
    <ligand>
        <name>Ni(2+)</name>
        <dbReference type="ChEBI" id="CHEBI:49786"/>
        <label>1</label>
    </ligand>
</feature>
<feature type="binding site" description="via carbamate group" evidence="1">
    <location>
        <position position="219"/>
    </location>
    <ligand>
        <name>Ni(2+)</name>
        <dbReference type="ChEBI" id="CHEBI:49786"/>
        <label>1</label>
    </ligand>
</feature>
<feature type="binding site" description="via carbamate group" evidence="1">
    <location>
        <position position="219"/>
    </location>
    <ligand>
        <name>Ni(2+)</name>
        <dbReference type="ChEBI" id="CHEBI:49786"/>
        <label>2</label>
    </ligand>
</feature>
<feature type="binding site" evidence="1">
    <location>
        <position position="221"/>
    </location>
    <ligand>
        <name>substrate</name>
    </ligand>
</feature>
<feature type="binding site" evidence="1">
    <location>
        <position position="248"/>
    </location>
    <ligand>
        <name>Ni(2+)</name>
        <dbReference type="ChEBI" id="CHEBI:49786"/>
        <label>2</label>
    </ligand>
</feature>
<feature type="binding site" evidence="1">
    <location>
        <position position="274"/>
    </location>
    <ligand>
        <name>Ni(2+)</name>
        <dbReference type="ChEBI" id="CHEBI:49786"/>
        <label>2</label>
    </ligand>
</feature>
<feature type="binding site" evidence="1">
    <location>
        <position position="362"/>
    </location>
    <ligand>
        <name>Ni(2+)</name>
        <dbReference type="ChEBI" id="CHEBI:49786"/>
        <label>1</label>
    </ligand>
</feature>
<feature type="modified residue" description="N6-carboxylysine" evidence="1">
    <location>
        <position position="219"/>
    </location>
</feature>
<protein>
    <recommendedName>
        <fullName evidence="1">Urease subunit beta</fullName>
        <ecNumber evidence="1">3.5.1.5</ecNumber>
    </recommendedName>
    <alternativeName>
        <fullName evidence="1">Urea amidohydrolase subunit beta</fullName>
    </alternativeName>
</protein>
<organism>
    <name type="scientific">Helicobacter pylori (strain G27)</name>
    <dbReference type="NCBI Taxonomy" id="563041"/>
    <lineage>
        <taxon>Bacteria</taxon>
        <taxon>Pseudomonadati</taxon>
        <taxon>Campylobacterota</taxon>
        <taxon>Epsilonproteobacteria</taxon>
        <taxon>Campylobacterales</taxon>
        <taxon>Helicobacteraceae</taxon>
        <taxon>Helicobacter</taxon>
    </lineage>
</organism>
<accession>B5Z674</accession>
<comment type="catalytic activity">
    <reaction evidence="1">
        <text>urea + 2 H2O + H(+) = hydrogencarbonate + 2 NH4(+)</text>
        <dbReference type="Rhea" id="RHEA:20557"/>
        <dbReference type="ChEBI" id="CHEBI:15377"/>
        <dbReference type="ChEBI" id="CHEBI:15378"/>
        <dbReference type="ChEBI" id="CHEBI:16199"/>
        <dbReference type="ChEBI" id="CHEBI:17544"/>
        <dbReference type="ChEBI" id="CHEBI:28938"/>
        <dbReference type="EC" id="3.5.1.5"/>
    </reaction>
</comment>
<comment type="cofactor">
    <cofactor evidence="1">
        <name>Ni cation</name>
        <dbReference type="ChEBI" id="CHEBI:25516"/>
    </cofactor>
    <text evidence="1">Binds 2 nickel ions per subunit.</text>
</comment>
<comment type="pathway">
    <text evidence="1">Nitrogen metabolism; urea degradation; CO(2) and NH(3) from urea (urease route): step 1/1.</text>
</comment>
<comment type="subunit">
    <text evidence="1">Heterohexamer of 3 UreA (alpha) and 3 UreB (beta) subunits.</text>
</comment>
<comment type="subcellular location">
    <subcellularLocation>
        <location evidence="1">Cytoplasm</location>
    </subcellularLocation>
</comment>
<comment type="PTM">
    <text evidence="1">Carboxylation allows a single lysine to coordinate two nickel ions.</text>
</comment>
<comment type="similarity">
    <text evidence="1">Belongs to the metallo-dependent hydrolases superfamily. Urease alpha subunit family.</text>
</comment>
<comment type="caution">
    <text evidence="2">The orthologous protein is known as the alpha subunit (UreC) in most other bacteria.</text>
</comment>
<name>URE1_HELPG</name>
<proteinExistence type="inferred from homology"/>
<dbReference type="EC" id="3.5.1.5" evidence="1"/>
<dbReference type="EMBL" id="CP001173">
    <property type="protein sequence ID" value="ACI26838.1"/>
    <property type="molecule type" value="Genomic_DNA"/>
</dbReference>
<dbReference type="RefSeq" id="WP_000724308.1">
    <property type="nucleotide sequence ID" value="NC_011333.1"/>
</dbReference>
<dbReference type="SMR" id="B5Z674"/>
<dbReference type="KEGG" id="hpg:HPG27_67"/>
<dbReference type="HOGENOM" id="CLU_000980_0_0_7"/>
<dbReference type="UniPathway" id="UPA00258">
    <property type="reaction ID" value="UER00370"/>
</dbReference>
<dbReference type="Proteomes" id="UP000001735">
    <property type="component" value="Chromosome"/>
</dbReference>
<dbReference type="GO" id="GO:0005737">
    <property type="term" value="C:cytoplasm"/>
    <property type="evidence" value="ECO:0007669"/>
    <property type="project" value="UniProtKB-SubCell"/>
</dbReference>
<dbReference type="GO" id="GO:0016151">
    <property type="term" value="F:nickel cation binding"/>
    <property type="evidence" value="ECO:0007669"/>
    <property type="project" value="UniProtKB-UniRule"/>
</dbReference>
<dbReference type="GO" id="GO:0009039">
    <property type="term" value="F:urease activity"/>
    <property type="evidence" value="ECO:0007669"/>
    <property type="project" value="UniProtKB-UniRule"/>
</dbReference>
<dbReference type="GO" id="GO:0043419">
    <property type="term" value="P:urea catabolic process"/>
    <property type="evidence" value="ECO:0007669"/>
    <property type="project" value="UniProtKB-UniRule"/>
</dbReference>
<dbReference type="CDD" id="cd00375">
    <property type="entry name" value="Urease_alpha"/>
    <property type="match status" value="1"/>
</dbReference>
<dbReference type="Gene3D" id="3.20.20.140">
    <property type="entry name" value="Metal-dependent hydrolases"/>
    <property type="match status" value="1"/>
</dbReference>
<dbReference type="Gene3D" id="2.30.40.10">
    <property type="entry name" value="Urease, subunit C, domain 1"/>
    <property type="match status" value="1"/>
</dbReference>
<dbReference type="HAMAP" id="MF_01953">
    <property type="entry name" value="Urease_alpha"/>
    <property type="match status" value="1"/>
</dbReference>
<dbReference type="InterPro" id="IPR006680">
    <property type="entry name" value="Amidohydro-rel"/>
</dbReference>
<dbReference type="InterPro" id="IPR011059">
    <property type="entry name" value="Metal-dep_hydrolase_composite"/>
</dbReference>
<dbReference type="InterPro" id="IPR032466">
    <property type="entry name" value="Metal_Hydrolase"/>
</dbReference>
<dbReference type="InterPro" id="IPR011612">
    <property type="entry name" value="Urease_alpha_N_dom"/>
</dbReference>
<dbReference type="InterPro" id="IPR050112">
    <property type="entry name" value="Urease_alpha_subunit"/>
</dbReference>
<dbReference type="InterPro" id="IPR017950">
    <property type="entry name" value="Urease_AS"/>
</dbReference>
<dbReference type="InterPro" id="IPR005848">
    <property type="entry name" value="Urease_asu"/>
</dbReference>
<dbReference type="InterPro" id="IPR017951">
    <property type="entry name" value="Urease_asu_c"/>
</dbReference>
<dbReference type="InterPro" id="IPR029754">
    <property type="entry name" value="Urease_Ni-bd"/>
</dbReference>
<dbReference type="NCBIfam" id="NF009686">
    <property type="entry name" value="PRK13207.1"/>
    <property type="match status" value="1"/>
</dbReference>
<dbReference type="NCBIfam" id="NF010591">
    <property type="entry name" value="PRK13985.1"/>
    <property type="match status" value="1"/>
</dbReference>
<dbReference type="NCBIfam" id="TIGR01792">
    <property type="entry name" value="urease_alph"/>
    <property type="match status" value="1"/>
</dbReference>
<dbReference type="PANTHER" id="PTHR43440">
    <property type="entry name" value="UREASE"/>
    <property type="match status" value="1"/>
</dbReference>
<dbReference type="PANTHER" id="PTHR43440:SF1">
    <property type="entry name" value="UREASE"/>
    <property type="match status" value="1"/>
</dbReference>
<dbReference type="Pfam" id="PF01979">
    <property type="entry name" value="Amidohydro_1"/>
    <property type="match status" value="1"/>
</dbReference>
<dbReference type="Pfam" id="PF00449">
    <property type="entry name" value="Urease_alpha"/>
    <property type="match status" value="1"/>
</dbReference>
<dbReference type="PRINTS" id="PR01752">
    <property type="entry name" value="UREASE"/>
</dbReference>
<dbReference type="SUPFAM" id="SSF51338">
    <property type="entry name" value="Composite domain of metallo-dependent hydrolases"/>
    <property type="match status" value="2"/>
</dbReference>
<dbReference type="SUPFAM" id="SSF51556">
    <property type="entry name" value="Metallo-dependent hydrolases"/>
    <property type="match status" value="1"/>
</dbReference>
<dbReference type="PROSITE" id="PS01120">
    <property type="entry name" value="UREASE_1"/>
    <property type="match status" value="1"/>
</dbReference>
<dbReference type="PROSITE" id="PS00145">
    <property type="entry name" value="UREASE_2"/>
    <property type="match status" value="1"/>
</dbReference>
<dbReference type="PROSITE" id="PS51368">
    <property type="entry name" value="UREASE_3"/>
    <property type="match status" value="1"/>
</dbReference>
<reference key="1">
    <citation type="journal article" date="2009" name="J. Bacteriol.">
        <title>The complete genome sequence of Helicobacter pylori strain G27.</title>
        <authorList>
            <person name="Baltrus D.A."/>
            <person name="Amieva M.R."/>
            <person name="Covacci A."/>
            <person name="Lowe T.M."/>
            <person name="Merrell D.S."/>
            <person name="Ottemann K.M."/>
            <person name="Stein M."/>
            <person name="Salama N.R."/>
            <person name="Guillemin K."/>
        </authorList>
    </citation>
    <scope>NUCLEOTIDE SEQUENCE [LARGE SCALE GENOMIC DNA]</scope>
    <source>
        <strain>G27</strain>
    </source>
</reference>
<keyword id="KW-0963">Cytoplasm</keyword>
<keyword id="KW-0378">Hydrolase</keyword>
<keyword id="KW-0479">Metal-binding</keyword>
<keyword id="KW-0533">Nickel</keyword>
<keyword id="KW-1185">Reference proteome</keyword>
<gene>
    <name evidence="1" type="primary">ureB</name>
    <name type="ordered locus">HPG27_67</name>
</gene>